<accession>A4YJI6</accession>
<organism>
    <name type="scientific">Bradyrhizobium sp. (strain ORS 278)</name>
    <dbReference type="NCBI Taxonomy" id="114615"/>
    <lineage>
        <taxon>Bacteria</taxon>
        <taxon>Pseudomonadati</taxon>
        <taxon>Pseudomonadota</taxon>
        <taxon>Alphaproteobacteria</taxon>
        <taxon>Hyphomicrobiales</taxon>
        <taxon>Nitrobacteraceae</taxon>
        <taxon>Bradyrhizobium</taxon>
    </lineage>
</organism>
<sequence>MTTAIPNSYRSGPDERGHFGIFGGRFVAETLMPLILDLEKAYADAKADPAFQGEMNSYRTHYVGRPSPLYYAERLTEHLGGAKIYFKRDELNHTGSHKVNNVLGQIMLARRMGKKRIIAETGAGQHGVATATLCARFGLDCVVYMGAVDVERQQPNVLRMEMLGAKVIPVQSGARTLKDAMNEALRDWVTNVHNTFYCIGTVAGPHPYPMMVRDFQSVIGQETRTQMQEAEGRLPDSLVACIGGGSNAMGLFHPFLDDPSVEIFGVEAAGHGLTQLHAASIAGGRPGVLHGNRTYLLMDDDGQIAEAHSISAGLDYPGIGPEHSWLHEAKRVTYLSATDDEALDAFLLLSRLEGIIPALEPAHAVAKVMQLAPNKPKDHLMVVNLCGRGDKDVPQVGEILRKRAKQS</sequence>
<gene>
    <name evidence="1" type="primary">trpB</name>
    <name type="ordered locus">BRADO0091</name>
</gene>
<evidence type="ECO:0000255" key="1">
    <source>
        <dbReference type="HAMAP-Rule" id="MF_00133"/>
    </source>
</evidence>
<proteinExistence type="inferred from homology"/>
<name>TRPB_BRASO</name>
<dbReference type="EC" id="4.2.1.20" evidence="1"/>
<dbReference type="EMBL" id="CU234118">
    <property type="protein sequence ID" value="CAL74062.1"/>
    <property type="molecule type" value="Genomic_DNA"/>
</dbReference>
<dbReference type="RefSeq" id="WP_011923362.1">
    <property type="nucleotide sequence ID" value="NC_009445.1"/>
</dbReference>
<dbReference type="SMR" id="A4YJI6"/>
<dbReference type="STRING" id="114615.BRADO0091"/>
<dbReference type="KEGG" id="bra:BRADO0091"/>
<dbReference type="eggNOG" id="COG0133">
    <property type="taxonomic scope" value="Bacteria"/>
</dbReference>
<dbReference type="HOGENOM" id="CLU_016734_3_1_5"/>
<dbReference type="OrthoDB" id="9766131at2"/>
<dbReference type="UniPathway" id="UPA00035">
    <property type="reaction ID" value="UER00044"/>
</dbReference>
<dbReference type="Proteomes" id="UP000001994">
    <property type="component" value="Chromosome"/>
</dbReference>
<dbReference type="GO" id="GO:0005737">
    <property type="term" value="C:cytoplasm"/>
    <property type="evidence" value="ECO:0007669"/>
    <property type="project" value="TreeGrafter"/>
</dbReference>
<dbReference type="GO" id="GO:0004834">
    <property type="term" value="F:tryptophan synthase activity"/>
    <property type="evidence" value="ECO:0007669"/>
    <property type="project" value="UniProtKB-UniRule"/>
</dbReference>
<dbReference type="CDD" id="cd06446">
    <property type="entry name" value="Trp-synth_B"/>
    <property type="match status" value="1"/>
</dbReference>
<dbReference type="FunFam" id="3.40.50.1100:FF:000001">
    <property type="entry name" value="Tryptophan synthase beta chain"/>
    <property type="match status" value="1"/>
</dbReference>
<dbReference type="FunFam" id="3.40.50.1100:FF:000004">
    <property type="entry name" value="Tryptophan synthase beta chain"/>
    <property type="match status" value="1"/>
</dbReference>
<dbReference type="Gene3D" id="3.40.50.1100">
    <property type="match status" value="2"/>
</dbReference>
<dbReference type="HAMAP" id="MF_00133">
    <property type="entry name" value="Trp_synth_beta"/>
    <property type="match status" value="1"/>
</dbReference>
<dbReference type="InterPro" id="IPR006653">
    <property type="entry name" value="Trp_synth_b_CS"/>
</dbReference>
<dbReference type="InterPro" id="IPR006654">
    <property type="entry name" value="Trp_synth_beta"/>
</dbReference>
<dbReference type="InterPro" id="IPR023026">
    <property type="entry name" value="Trp_synth_beta/beta-like"/>
</dbReference>
<dbReference type="InterPro" id="IPR001926">
    <property type="entry name" value="TrpB-like_PALP"/>
</dbReference>
<dbReference type="InterPro" id="IPR036052">
    <property type="entry name" value="TrpB-like_PALP_sf"/>
</dbReference>
<dbReference type="NCBIfam" id="TIGR00263">
    <property type="entry name" value="trpB"/>
    <property type="match status" value="1"/>
</dbReference>
<dbReference type="PANTHER" id="PTHR48077:SF3">
    <property type="entry name" value="TRYPTOPHAN SYNTHASE"/>
    <property type="match status" value="1"/>
</dbReference>
<dbReference type="PANTHER" id="PTHR48077">
    <property type="entry name" value="TRYPTOPHAN SYNTHASE-RELATED"/>
    <property type="match status" value="1"/>
</dbReference>
<dbReference type="Pfam" id="PF00291">
    <property type="entry name" value="PALP"/>
    <property type="match status" value="1"/>
</dbReference>
<dbReference type="PIRSF" id="PIRSF001413">
    <property type="entry name" value="Trp_syn_beta"/>
    <property type="match status" value="1"/>
</dbReference>
<dbReference type="SUPFAM" id="SSF53686">
    <property type="entry name" value="Tryptophan synthase beta subunit-like PLP-dependent enzymes"/>
    <property type="match status" value="1"/>
</dbReference>
<dbReference type="PROSITE" id="PS00168">
    <property type="entry name" value="TRP_SYNTHASE_BETA"/>
    <property type="match status" value="1"/>
</dbReference>
<reference key="1">
    <citation type="journal article" date="2007" name="Science">
        <title>Legumes symbioses: absence of nod genes in photosynthetic bradyrhizobia.</title>
        <authorList>
            <person name="Giraud E."/>
            <person name="Moulin L."/>
            <person name="Vallenet D."/>
            <person name="Barbe V."/>
            <person name="Cytryn E."/>
            <person name="Avarre J.-C."/>
            <person name="Jaubert M."/>
            <person name="Simon D."/>
            <person name="Cartieaux F."/>
            <person name="Prin Y."/>
            <person name="Bena G."/>
            <person name="Hannibal L."/>
            <person name="Fardoux J."/>
            <person name="Kojadinovic M."/>
            <person name="Vuillet L."/>
            <person name="Lajus A."/>
            <person name="Cruveiller S."/>
            <person name="Rouy Z."/>
            <person name="Mangenot S."/>
            <person name="Segurens B."/>
            <person name="Dossat C."/>
            <person name="Franck W.L."/>
            <person name="Chang W.-S."/>
            <person name="Saunders E."/>
            <person name="Bruce D."/>
            <person name="Richardson P."/>
            <person name="Normand P."/>
            <person name="Dreyfus B."/>
            <person name="Pignol D."/>
            <person name="Stacey G."/>
            <person name="Emerich D."/>
            <person name="Vermeglio A."/>
            <person name="Medigue C."/>
            <person name="Sadowsky M."/>
        </authorList>
    </citation>
    <scope>NUCLEOTIDE SEQUENCE [LARGE SCALE GENOMIC DNA]</scope>
    <source>
        <strain>ORS 278</strain>
    </source>
</reference>
<keyword id="KW-0028">Amino-acid biosynthesis</keyword>
<keyword id="KW-0057">Aromatic amino acid biosynthesis</keyword>
<keyword id="KW-0456">Lyase</keyword>
<keyword id="KW-0663">Pyridoxal phosphate</keyword>
<keyword id="KW-1185">Reference proteome</keyword>
<keyword id="KW-0822">Tryptophan biosynthesis</keyword>
<feature type="chain" id="PRO_1000018328" description="Tryptophan synthase beta chain">
    <location>
        <begin position="1"/>
        <end position="407"/>
    </location>
</feature>
<feature type="modified residue" description="N6-(pyridoxal phosphate)lysine" evidence="1">
    <location>
        <position position="98"/>
    </location>
</feature>
<comment type="function">
    <text evidence="1">The beta subunit is responsible for the synthesis of L-tryptophan from indole and L-serine.</text>
</comment>
<comment type="catalytic activity">
    <reaction evidence="1">
        <text>(1S,2R)-1-C-(indol-3-yl)glycerol 3-phosphate + L-serine = D-glyceraldehyde 3-phosphate + L-tryptophan + H2O</text>
        <dbReference type="Rhea" id="RHEA:10532"/>
        <dbReference type="ChEBI" id="CHEBI:15377"/>
        <dbReference type="ChEBI" id="CHEBI:33384"/>
        <dbReference type="ChEBI" id="CHEBI:57912"/>
        <dbReference type="ChEBI" id="CHEBI:58866"/>
        <dbReference type="ChEBI" id="CHEBI:59776"/>
        <dbReference type="EC" id="4.2.1.20"/>
    </reaction>
</comment>
<comment type="cofactor">
    <cofactor evidence="1">
        <name>pyridoxal 5'-phosphate</name>
        <dbReference type="ChEBI" id="CHEBI:597326"/>
    </cofactor>
</comment>
<comment type="pathway">
    <text evidence="1">Amino-acid biosynthesis; L-tryptophan biosynthesis; L-tryptophan from chorismate: step 5/5.</text>
</comment>
<comment type="subunit">
    <text evidence="1">Tetramer of two alpha and two beta chains.</text>
</comment>
<comment type="similarity">
    <text evidence="1">Belongs to the TrpB family.</text>
</comment>
<protein>
    <recommendedName>
        <fullName evidence="1">Tryptophan synthase beta chain</fullName>
        <ecNumber evidence="1">4.2.1.20</ecNumber>
    </recommendedName>
</protein>